<comment type="function">
    <text evidence="1">The RuvA-RuvB-RuvC complex processes Holliday junction (HJ) DNA during genetic recombination and DNA repair, while the RuvA-RuvB complex plays an important role in the rescue of blocked DNA replication forks via replication fork reversal (RFR). RuvA specifically binds to HJ cruciform DNA, conferring on it an open structure. The RuvB hexamer acts as an ATP-dependent pump, pulling dsDNA into and through the RuvAB complex. HJ branch migration allows RuvC to scan DNA until it finds its consensus sequence, where it cleaves and resolves the cruciform DNA.</text>
</comment>
<comment type="subunit">
    <text evidence="1">Homotetramer. Forms an RuvA(8)-RuvB(12)-Holliday junction (HJ) complex. HJ DNA is sandwiched between 2 RuvA tetramers; dsDNA enters through RuvA and exits via RuvB. An RuvB hexamer assembles on each DNA strand where it exits the tetramer. Each RuvB hexamer is contacted by two RuvA subunits (via domain III) on 2 adjacent RuvB subunits; this complex drives branch migration. In the full resolvosome a probable DNA-RuvA(4)-RuvB(12)-RuvC(2) complex forms which resolves the HJ.</text>
</comment>
<comment type="subcellular location">
    <subcellularLocation>
        <location evidence="1">Cytoplasm</location>
    </subcellularLocation>
</comment>
<comment type="domain">
    <text evidence="1">Has three domains with a flexible linker between the domains II and III and assumes an 'L' shape. Domain III is highly mobile and contacts RuvB.</text>
</comment>
<comment type="similarity">
    <text evidence="1">Belongs to the RuvA family.</text>
</comment>
<sequence>MIGKLKGVIDSYGEDYVILDVQGVGYLVHCATRTLQALPSSGEAAVLSIETYVREDQIKLFGFRSDIEREWFRLLQTVQGVGAKVALAVLSTLPPSDLANAIALRDKAAVARTPGVGPKVAERIVTELKDKAPAFANVDPAVVHLAGAVDDDRAPRPVKDAISALVNLGYGQPQAAAAIASVARDAGEGAETAQLIRLGLKELAK</sequence>
<feature type="chain" id="PRO_1000090345" description="Holliday junction branch migration complex subunit RuvA">
    <location>
        <begin position="1"/>
        <end position="205"/>
    </location>
</feature>
<feature type="region of interest" description="Domain I" evidence="1">
    <location>
        <begin position="1"/>
        <end position="64"/>
    </location>
</feature>
<feature type="region of interest" description="Domain II" evidence="1">
    <location>
        <begin position="65"/>
        <end position="143"/>
    </location>
</feature>
<feature type="region of interest" description="Flexible linker" evidence="1">
    <location>
        <begin position="144"/>
        <end position="154"/>
    </location>
</feature>
<feature type="region of interest" description="Domain III" evidence="1">
    <location>
        <begin position="154"/>
        <end position="205"/>
    </location>
</feature>
<keyword id="KW-0963">Cytoplasm</keyword>
<keyword id="KW-0227">DNA damage</keyword>
<keyword id="KW-0233">DNA recombination</keyword>
<keyword id="KW-0234">DNA repair</keyword>
<keyword id="KW-0238">DNA-binding</keyword>
<keyword id="KW-1185">Reference proteome</keyword>
<evidence type="ECO:0000255" key="1">
    <source>
        <dbReference type="HAMAP-Rule" id="MF_00031"/>
    </source>
</evidence>
<accession>B6JIZ6</accession>
<accession>F8BZ46</accession>
<dbReference type="EMBL" id="CP001196">
    <property type="protein sequence ID" value="ACI94405.1"/>
    <property type="molecule type" value="Genomic_DNA"/>
</dbReference>
<dbReference type="EMBL" id="CP002826">
    <property type="protein sequence ID" value="AEI05537.1"/>
    <property type="molecule type" value="Genomic_DNA"/>
</dbReference>
<dbReference type="RefSeq" id="WP_012564431.1">
    <property type="nucleotide sequence ID" value="NC_015684.1"/>
</dbReference>
<dbReference type="SMR" id="B6JIZ6"/>
<dbReference type="STRING" id="504832.OCA5_c08150"/>
<dbReference type="KEGG" id="oca:OCAR_7301"/>
<dbReference type="KEGG" id="ocg:OCA5_c08150"/>
<dbReference type="PATRIC" id="fig|504832.7.peg.861"/>
<dbReference type="eggNOG" id="COG0632">
    <property type="taxonomic scope" value="Bacteria"/>
</dbReference>
<dbReference type="HOGENOM" id="CLU_087936_3_0_5"/>
<dbReference type="OrthoDB" id="5293449at2"/>
<dbReference type="Proteomes" id="UP000007730">
    <property type="component" value="Chromosome"/>
</dbReference>
<dbReference type="GO" id="GO:0005737">
    <property type="term" value="C:cytoplasm"/>
    <property type="evidence" value="ECO:0007669"/>
    <property type="project" value="UniProtKB-SubCell"/>
</dbReference>
<dbReference type="GO" id="GO:0009379">
    <property type="term" value="C:Holliday junction helicase complex"/>
    <property type="evidence" value="ECO:0007669"/>
    <property type="project" value="InterPro"/>
</dbReference>
<dbReference type="GO" id="GO:0048476">
    <property type="term" value="C:Holliday junction resolvase complex"/>
    <property type="evidence" value="ECO:0007669"/>
    <property type="project" value="UniProtKB-UniRule"/>
</dbReference>
<dbReference type="GO" id="GO:0005524">
    <property type="term" value="F:ATP binding"/>
    <property type="evidence" value="ECO:0007669"/>
    <property type="project" value="InterPro"/>
</dbReference>
<dbReference type="GO" id="GO:0000400">
    <property type="term" value="F:four-way junction DNA binding"/>
    <property type="evidence" value="ECO:0007669"/>
    <property type="project" value="UniProtKB-UniRule"/>
</dbReference>
<dbReference type="GO" id="GO:0009378">
    <property type="term" value="F:four-way junction helicase activity"/>
    <property type="evidence" value="ECO:0007669"/>
    <property type="project" value="InterPro"/>
</dbReference>
<dbReference type="GO" id="GO:0006310">
    <property type="term" value="P:DNA recombination"/>
    <property type="evidence" value="ECO:0007669"/>
    <property type="project" value="UniProtKB-UniRule"/>
</dbReference>
<dbReference type="GO" id="GO:0006281">
    <property type="term" value="P:DNA repair"/>
    <property type="evidence" value="ECO:0007669"/>
    <property type="project" value="UniProtKB-UniRule"/>
</dbReference>
<dbReference type="Gene3D" id="1.10.150.20">
    <property type="entry name" value="5' to 3' exonuclease, C-terminal subdomain"/>
    <property type="match status" value="1"/>
</dbReference>
<dbReference type="Gene3D" id="1.10.8.10">
    <property type="entry name" value="DNA helicase RuvA subunit, C-terminal domain"/>
    <property type="match status" value="1"/>
</dbReference>
<dbReference type="Gene3D" id="2.40.50.140">
    <property type="entry name" value="Nucleic acid-binding proteins"/>
    <property type="match status" value="1"/>
</dbReference>
<dbReference type="HAMAP" id="MF_00031">
    <property type="entry name" value="DNA_HJ_migration_RuvA"/>
    <property type="match status" value="1"/>
</dbReference>
<dbReference type="InterPro" id="IPR013849">
    <property type="entry name" value="DNA_helicase_Holl-junc_RuvA_I"/>
</dbReference>
<dbReference type="InterPro" id="IPR003583">
    <property type="entry name" value="Hlx-hairpin-Hlx_DNA-bd_motif"/>
</dbReference>
<dbReference type="InterPro" id="IPR012340">
    <property type="entry name" value="NA-bd_OB-fold"/>
</dbReference>
<dbReference type="InterPro" id="IPR000085">
    <property type="entry name" value="RuvA"/>
</dbReference>
<dbReference type="InterPro" id="IPR010994">
    <property type="entry name" value="RuvA_2-like"/>
</dbReference>
<dbReference type="InterPro" id="IPR011114">
    <property type="entry name" value="RuvA_C"/>
</dbReference>
<dbReference type="InterPro" id="IPR036267">
    <property type="entry name" value="RuvA_C_sf"/>
</dbReference>
<dbReference type="NCBIfam" id="TIGR00084">
    <property type="entry name" value="ruvA"/>
    <property type="match status" value="1"/>
</dbReference>
<dbReference type="Pfam" id="PF14520">
    <property type="entry name" value="HHH_5"/>
    <property type="match status" value="1"/>
</dbReference>
<dbReference type="Pfam" id="PF07499">
    <property type="entry name" value="RuvA_C"/>
    <property type="match status" value="1"/>
</dbReference>
<dbReference type="Pfam" id="PF01330">
    <property type="entry name" value="RuvA_N"/>
    <property type="match status" value="1"/>
</dbReference>
<dbReference type="SMART" id="SM00278">
    <property type="entry name" value="HhH1"/>
    <property type="match status" value="2"/>
</dbReference>
<dbReference type="SUPFAM" id="SSF46929">
    <property type="entry name" value="DNA helicase RuvA subunit, C-terminal domain"/>
    <property type="match status" value="1"/>
</dbReference>
<dbReference type="SUPFAM" id="SSF50249">
    <property type="entry name" value="Nucleic acid-binding proteins"/>
    <property type="match status" value="1"/>
</dbReference>
<dbReference type="SUPFAM" id="SSF47781">
    <property type="entry name" value="RuvA domain 2-like"/>
    <property type="match status" value="1"/>
</dbReference>
<proteinExistence type="inferred from homology"/>
<organism>
    <name type="scientific">Afipia carboxidovorans (strain ATCC 49405 / DSM 1227 / KCTC 32145 / OM5)</name>
    <name type="common">Oligotropha carboxidovorans</name>
    <dbReference type="NCBI Taxonomy" id="504832"/>
    <lineage>
        <taxon>Bacteria</taxon>
        <taxon>Pseudomonadati</taxon>
        <taxon>Pseudomonadota</taxon>
        <taxon>Alphaproteobacteria</taxon>
        <taxon>Hyphomicrobiales</taxon>
        <taxon>Nitrobacteraceae</taxon>
        <taxon>Afipia</taxon>
    </lineage>
</organism>
<protein>
    <recommendedName>
        <fullName evidence="1">Holliday junction branch migration complex subunit RuvA</fullName>
    </recommendedName>
</protein>
<gene>
    <name evidence="1" type="primary">ruvA</name>
    <name type="ordered locus">OCAR_7301</name>
    <name type="ordered locus">OCA5_c08150</name>
</gene>
<reference key="1">
    <citation type="journal article" date="2008" name="J. Bacteriol.">
        <title>Genome sequence of the chemolithoautotrophic bacterium Oligotropha carboxidovorans OM5T.</title>
        <authorList>
            <person name="Paul D."/>
            <person name="Bridges S."/>
            <person name="Burgess S.C."/>
            <person name="Dandass Y."/>
            <person name="Lawrence M.L."/>
        </authorList>
    </citation>
    <scope>NUCLEOTIDE SEQUENCE [LARGE SCALE GENOMIC DNA]</scope>
    <source>
        <strain>ATCC 49405 / DSM 1227 / KCTC 32145 / OM5</strain>
    </source>
</reference>
<reference key="2">
    <citation type="journal article" date="2011" name="J. Bacteriol.">
        <title>Complete genome sequences of the chemolithoautotrophic Oligotropha carboxidovorans strains OM4 and OM5.</title>
        <authorList>
            <person name="Volland S."/>
            <person name="Rachinger M."/>
            <person name="Strittmatter A."/>
            <person name="Daniel R."/>
            <person name="Gottschalk G."/>
            <person name="Meyer O."/>
        </authorList>
    </citation>
    <scope>NUCLEOTIDE SEQUENCE [LARGE SCALE GENOMIC DNA]</scope>
    <source>
        <strain>ATCC 49405 / DSM 1227 / KCTC 32145 / OM5</strain>
    </source>
</reference>
<name>RUVA_AFIC5</name>